<gene>
    <name type="primary">yta12</name>
    <name type="ORF">SPBC543.09</name>
</gene>
<sequence>MRNPFLTFRAPTRKTGDYLVSKFVKKDNFSSLRLARAYTFSTRSTAVSQFSLLSLSQRSFQSLKINKGIPEKHKIPLISSKQFSVTSKRSQNGSSGSNSDANGRKNGQKNDDSKKKGLNGNDPKKVFEIALNGNTILGGILVAYILYNVLSPNANMQEITWQDFRQQFLDKGLVERLVVVNRNMVRVILRGGVASGSGQYYFSIGSIDSFDRKLEDAQRQLGIPPSEFVPVAYHDEVSVLATLLSFAPTLLIIGSVIYLSRRASGAAGGGQGGIFGIGKSRAKMFNHETDIKIKFADVAGVDEAKEEIMEFVKFLKNPKFYERLGAKIPRGAILSGPPGTGKTLLAKATAGEANVPFLSVSGSEFLEMFVGVGPSRVRDLFATARKNAPCIIFIDEIDAIGKARGRGGQFGSNDERESTLNQLLVEMDGFTSSEHIVVFAGTNRPDVLDPALLRPGRFDRQITIDRPDIGGREQIFKVHLKHIKAADNIDLIAKRLAVLTSGFTGADIMNVCNEGALIAARSNSNEVQMVHFEQAIERVTAGLEKKSRVLSPEEKNTVAHHEAGHAVAGWFMEYVDPLLKVSIIPRAQALGYASYLPKDQYLMSRGQILDQMGMALAGRVSEEIFFGPEKITSGASDDFQKVTRMAQAYVTQYGMSPTVGTIAYPIDTRETVQKPFSEATAQMIDEEIRKLVKHAYERTKKLLLEHKQGLENIAQRLLQKEVITYNEVETILGPRPYAYKHLNISELMRQSEYKNDHDPRNPPIPPSPQQPSA</sequence>
<keyword id="KW-0067">ATP-binding</keyword>
<keyword id="KW-0378">Hydrolase</keyword>
<keyword id="KW-0472">Membrane</keyword>
<keyword id="KW-0479">Metal-binding</keyword>
<keyword id="KW-0482">Metalloprotease</keyword>
<keyword id="KW-0496">Mitochondrion</keyword>
<keyword id="KW-0547">Nucleotide-binding</keyword>
<keyword id="KW-0645">Protease</keyword>
<keyword id="KW-1185">Reference proteome</keyword>
<keyword id="KW-0812">Transmembrane</keyword>
<keyword id="KW-1133">Transmembrane helix</keyword>
<keyword id="KW-0862">Zinc</keyword>
<organism>
    <name type="scientific">Schizosaccharomyces pombe (strain 972 / ATCC 24843)</name>
    <name type="common">Fission yeast</name>
    <dbReference type="NCBI Taxonomy" id="284812"/>
    <lineage>
        <taxon>Eukaryota</taxon>
        <taxon>Fungi</taxon>
        <taxon>Dikarya</taxon>
        <taxon>Ascomycota</taxon>
        <taxon>Taphrinomycotina</taxon>
        <taxon>Schizosaccharomycetes</taxon>
        <taxon>Schizosaccharomycetales</taxon>
        <taxon>Schizosaccharomycetaceae</taxon>
        <taxon>Schizosaccharomyces</taxon>
    </lineage>
</organism>
<comment type="function">
    <text evidence="1">Catalytic component of the m-AAA protease, a protease that plays a key role in proteostasis of inner mitochondrial membrane proteins (By similarity). Possesses both ATPase and protease activities: the ATPase activity is required to unfold substrates, threading them into the internal proteolytic cavity for hydrolysis into small peptide fragments (By similarity). The complex is necessary for the assembly of mitochondrial respiratory chain and ATPase complexes (By similarity). The m-AAA protease carries out protein quality control in the inner membrane of the mitochondria by mediating degradation of mistranslated or misfolded polypeptides (By similarity). It also mediates protein maturation of the mitochondrial ribosomal subunit mrpl32/bL32m by catalyzing the cleavage of the presequence of mrpl32/bL32m prior to assembly into the mitochondrial ribosome (By similarity). Also acts as a membrane protein dislocase: required to dislocate moderately hydrophobic transmembrane segments from the membrane (By similarity).</text>
</comment>
<comment type="catalytic activity">
    <reaction evidence="1">
        <text>ATP + H2O = ADP + phosphate + H(+)</text>
        <dbReference type="Rhea" id="RHEA:13065"/>
        <dbReference type="ChEBI" id="CHEBI:15377"/>
        <dbReference type="ChEBI" id="CHEBI:15378"/>
        <dbReference type="ChEBI" id="CHEBI:30616"/>
        <dbReference type="ChEBI" id="CHEBI:43474"/>
        <dbReference type="ChEBI" id="CHEBI:456216"/>
    </reaction>
    <physiologicalReaction direction="left-to-right" evidence="1">
        <dbReference type="Rhea" id="RHEA:13066"/>
    </physiologicalReaction>
</comment>
<comment type="cofactor">
    <cofactor evidence="2">
        <name>Zn(2+)</name>
        <dbReference type="ChEBI" id="CHEBI:29105"/>
    </cofactor>
    <text evidence="2">Binds 1 zinc ion per subunit.</text>
</comment>
<comment type="subunit">
    <text evidence="1">Component of the m-AAA protease complex.</text>
</comment>
<comment type="subcellular location">
    <subcellularLocation>
        <location evidence="5">Mitochondrion membrane</location>
        <topology evidence="5">Multi-pass membrane protein</topology>
    </subcellularLocation>
</comment>
<comment type="similarity">
    <text evidence="6">In the N-terminal section; belongs to the AAA ATPase family.</text>
</comment>
<comment type="similarity">
    <text evidence="6">In the C-terminal section; belongs to the peptidase M41 family.</text>
</comment>
<feature type="chain" id="PRO_0000317334" description="Mitochondrial inner membrane m-AAA protease component yta12">
    <location>
        <begin position="1"/>
        <end position="773"/>
    </location>
</feature>
<feature type="transmembrane region" description="Helical" evidence="3">
    <location>
        <begin position="126"/>
        <end position="146"/>
    </location>
</feature>
<feature type="transmembrane region" description="Helical" evidence="3">
    <location>
        <begin position="239"/>
        <end position="259"/>
    </location>
</feature>
<feature type="region of interest" description="Disordered" evidence="4">
    <location>
        <begin position="83"/>
        <end position="119"/>
    </location>
</feature>
<feature type="region of interest" description="Disordered" evidence="4">
    <location>
        <begin position="752"/>
        <end position="773"/>
    </location>
</feature>
<feature type="compositionally biased region" description="Low complexity" evidence="4">
    <location>
        <begin position="87"/>
        <end position="101"/>
    </location>
</feature>
<feature type="compositionally biased region" description="Pro residues" evidence="4">
    <location>
        <begin position="761"/>
        <end position="773"/>
    </location>
</feature>
<feature type="active site" evidence="2">
    <location>
        <position position="562"/>
    </location>
</feature>
<feature type="binding site" evidence="2">
    <location>
        <position position="298"/>
    </location>
    <ligand>
        <name>ATP</name>
        <dbReference type="ChEBI" id="CHEBI:30616"/>
    </ligand>
</feature>
<feature type="binding site" evidence="2">
    <location>
        <position position="299"/>
    </location>
    <ligand>
        <name>ATP</name>
        <dbReference type="ChEBI" id="CHEBI:30616"/>
    </ligand>
</feature>
<feature type="binding site" evidence="2">
    <location>
        <position position="340"/>
    </location>
    <ligand>
        <name>ATP</name>
        <dbReference type="ChEBI" id="CHEBI:30616"/>
    </ligand>
</feature>
<feature type="binding site" evidence="2">
    <location>
        <position position="341"/>
    </location>
    <ligand>
        <name>ATP</name>
        <dbReference type="ChEBI" id="CHEBI:30616"/>
    </ligand>
</feature>
<feature type="binding site" evidence="2">
    <location>
        <position position="342"/>
    </location>
    <ligand>
        <name>ATP</name>
        <dbReference type="ChEBI" id="CHEBI:30616"/>
    </ligand>
</feature>
<feature type="binding site" evidence="2">
    <location>
        <position position="343"/>
    </location>
    <ligand>
        <name>ATP</name>
        <dbReference type="ChEBI" id="CHEBI:30616"/>
    </ligand>
</feature>
<feature type="binding site" evidence="2">
    <location>
        <position position="344"/>
    </location>
    <ligand>
        <name>ATP</name>
        <dbReference type="ChEBI" id="CHEBI:30616"/>
    </ligand>
</feature>
<feature type="binding site" evidence="2">
    <location>
        <position position="479"/>
    </location>
    <ligand>
        <name>ATP</name>
        <dbReference type="ChEBI" id="CHEBI:30616"/>
    </ligand>
</feature>
<feature type="binding site" evidence="2">
    <location>
        <position position="561"/>
    </location>
    <ligand>
        <name>Zn(2+)</name>
        <dbReference type="ChEBI" id="CHEBI:29105"/>
        <note>catalytic</note>
    </ligand>
</feature>
<feature type="binding site" evidence="2">
    <location>
        <position position="565"/>
    </location>
    <ligand>
        <name>Zn(2+)</name>
        <dbReference type="ChEBI" id="CHEBI:29105"/>
        <note>catalytic</note>
    </ligand>
</feature>
<feature type="binding site" evidence="2">
    <location>
        <position position="638"/>
    </location>
    <ligand>
        <name>Zn(2+)</name>
        <dbReference type="ChEBI" id="CHEBI:29105"/>
        <note>catalytic</note>
    </ligand>
</feature>
<proteinExistence type="inferred from homology"/>
<protein>
    <recommendedName>
        <fullName evidence="6">Mitochondrial inner membrane m-AAA protease component yta12</fullName>
        <ecNumber evidence="1">3.4.24.-</ecNumber>
        <ecNumber evidence="1">3.6.-.-</ecNumber>
    </recommendedName>
</protein>
<evidence type="ECO:0000250" key="1">
    <source>
        <dbReference type="UniProtKB" id="P40341"/>
    </source>
</evidence>
<evidence type="ECO:0000250" key="2">
    <source>
        <dbReference type="UniProtKB" id="Q9Y4W6"/>
    </source>
</evidence>
<evidence type="ECO:0000255" key="3"/>
<evidence type="ECO:0000256" key="4">
    <source>
        <dbReference type="SAM" id="MobiDB-lite"/>
    </source>
</evidence>
<evidence type="ECO:0000269" key="5">
    <source>
    </source>
</evidence>
<evidence type="ECO:0000305" key="6"/>
<name>YTA12_SCHPO</name>
<accession>Q9HGM3</accession>
<reference key="1">
    <citation type="journal article" date="2002" name="Nature">
        <title>The genome sequence of Schizosaccharomyces pombe.</title>
        <authorList>
            <person name="Wood V."/>
            <person name="Gwilliam R."/>
            <person name="Rajandream M.A."/>
            <person name="Lyne M.H."/>
            <person name="Lyne R."/>
            <person name="Stewart A."/>
            <person name="Sgouros J.G."/>
            <person name="Peat N."/>
            <person name="Hayles J."/>
            <person name="Baker S.G."/>
            <person name="Basham D."/>
            <person name="Bowman S."/>
            <person name="Brooks K."/>
            <person name="Brown D."/>
            <person name="Brown S."/>
            <person name="Chillingworth T."/>
            <person name="Churcher C.M."/>
            <person name="Collins M."/>
            <person name="Connor R."/>
            <person name="Cronin A."/>
            <person name="Davis P."/>
            <person name="Feltwell T."/>
            <person name="Fraser A."/>
            <person name="Gentles S."/>
            <person name="Goble A."/>
            <person name="Hamlin N."/>
            <person name="Harris D.E."/>
            <person name="Hidalgo J."/>
            <person name="Hodgson G."/>
            <person name="Holroyd S."/>
            <person name="Hornsby T."/>
            <person name="Howarth S."/>
            <person name="Huckle E.J."/>
            <person name="Hunt S."/>
            <person name="Jagels K."/>
            <person name="James K.D."/>
            <person name="Jones L."/>
            <person name="Jones M."/>
            <person name="Leather S."/>
            <person name="McDonald S."/>
            <person name="McLean J."/>
            <person name="Mooney P."/>
            <person name="Moule S."/>
            <person name="Mungall K.L."/>
            <person name="Murphy L.D."/>
            <person name="Niblett D."/>
            <person name="Odell C."/>
            <person name="Oliver K."/>
            <person name="O'Neil S."/>
            <person name="Pearson D."/>
            <person name="Quail M.A."/>
            <person name="Rabbinowitsch E."/>
            <person name="Rutherford K.M."/>
            <person name="Rutter S."/>
            <person name="Saunders D."/>
            <person name="Seeger K."/>
            <person name="Sharp S."/>
            <person name="Skelton J."/>
            <person name="Simmonds M.N."/>
            <person name="Squares R."/>
            <person name="Squares S."/>
            <person name="Stevens K."/>
            <person name="Taylor K."/>
            <person name="Taylor R.G."/>
            <person name="Tivey A."/>
            <person name="Walsh S.V."/>
            <person name="Warren T."/>
            <person name="Whitehead S."/>
            <person name="Woodward J.R."/>
            <person name="Volckaert G."/>
            <person name="Aert R."/>
            <person name="Robben J."/>
            <person name="Grymonprez B."/>
            <person name="Weltjens I."/>
            <person name="Vanstreels E."/>
            <person name="Rieger M."/>
            <person name="Schaefer M."/>
            <person name="Mueller-Auer S."/>
            <person name="Gabel C."/>
            <person name="Fuchs M."/>
            <person name="Duesterhoeft A."/>
            <person name="Fritzc C."/>
            <person name="Holzer E."/>
            <person name="Moestl D."/>
            <person name="Hilbert H."/>
            <person name="Borzym K."/>
            <person name="Langer I."/>
            <person name="Beck A."/>
            <person name="Lehrach H."/>
            <person name="Reinhardt R."/>
            <person name="Pohl T.M."/>
            <person name="Eger P."/>
            <person name="Zimmermann W."/>
            <person name="Wedler H."/>
            <person name="Wambutt R."/>
            <person name="Purnelle B."/>
            <person name="Goffeau A."/>
            <person name="Cadieu E."/>
            <person name="Dreano S."/>
            <person name="Gloux S."/>
            <person name="Lelaure V."/>
            <person name="Mottier S."/>
            <person name="Galibert F."/>
            <person name="Aves S.J."/>
            <person name="Xiang Z."/>
            <person name="Hunt C."/>
            <person name="Moore K."/>
            <person name="Hurst S.M."/>
            <person name="Lucas M."/>
            <person name="Rochet M."/>
            <person name="Gaillardin C."/>
            <person name="Tallada V.A."/>
            <person name="Garzon A."/>
            <person name="Thode G."/>
            <person name="Daga R.R."/>
            <person name="Cruzado L."/>
            <person name="Jimenez J."/>
            <person name="Sanchez M."/>
            <person name="del Rey F."/>
            <person name="Benito J."/>
            <person name="Dominguez A."/>
            <person name="Revuelta J.L."/>
            <person name="Moreno S."/>
            <person name="Armstrong J."/>
            <person name="Forsburg S.L."/>
            <person name="Cerutti L."/>
            <person name="Lowe T."/>
            <person name="McCombie W.R."/>
            <person name="Paulsen I."/>
            <person name="Potashkin J."/>
            <person name="Shpakovski G.V."/>
            <person name="Ussery D."/>
            <person name="Barrell B.G."/>
            <person name="Nurse P."/>
        </authorList>
    </citation>
    <scope>NUCLEOTIDE SEQUENCE [LARGE SCALE GENOMIC DNA]</scope>
    <source>
        <strain>972 / ATCC 24843</strain>
    </source>
</reference>
<reference key="2">
    <citation type="journal article" date="2006" name="Nat. Biotechnol.">
        <title>ORFeome cloning and global analysis of protein localization in the fission yeast Schizosaccharomyces pombe.</title>
        <authorList>
            <person name="Matsuyama A."/>
            <person name="Arai R."/>
            <person name="Yashiroda Y."/>
            <person name="Shirai A."/>
            <person name="Kamata A."/>
            <person name="Sekido S."/>
            <person name="Kobayashi Y."/>
            <person name="Hashimoto A."/>
            <person name="Hamamoto M."/>
            <person name="Hiraoka Y."/>
            <person name="Horinouchi S."/>
            <person name="Yoshida M."/>
        </authorList>
    </citation>
    <scope>SUBCELLULAR LOCATION [LARGE SCALE ANALYSIS]</scope>
</reference>
<dbReference type="EC" id="3.4.24.-" evidence="1"/>
<dbReference type="EC" id="3.6.-.-" evidence="1"/>
<dbReference type="EMBL" id="CU329671">
    <property type="protein sequence ID" value="CAC05251.1"/>
    <property type="molecule type" value="Genomic_DNA"/>
</dbReference>
<dbReference type="RefSeq" id="NP_596797.1">
    <property type="nucleotide sequence ID" value="NM_001023817.2"/>
</dbReference>
<dbReference type="SMR" id="Q9HGM3"/>
<dbReference type="BioGRID" id="277594">
    <property type="interactions" value="2"/>
</dbReference>
<dbReference type="FunCoup" id="Q9HGM3">
    <property type="interactions" value="257"/>
</dbReference>
<dbReference type="STRING" id="284812.Q9HGM3"/>
<dbReference type="MEROPS" id="M41.A14"/>
<dbReference type="SwissPalm" id="Q9HGM3"/>
<dbReference type="PaxDb" id="4896-SPBC543.09.1"/>
<dbReference type="EnsemblFungi" id="SPBC543.09.1">
    <property type="protein sequence ID" value="SPBC543.09.1:pep"/>
    <property type="gene ID" value="SPBC543.09"/>
</dbReference>
<dbReference type="GeneID" id="2541079"/>
<dbReference type="KEGG" id="spo:2541079"/>
<dbReference type="PomBase" id="SPBC543.09">
    <property type="gene designation" value="yta12"/>
</dbReference>
<dbReference type="VEuPathDB" id="FungiDB:SPBC543.09"/>
<dbReference type="eggNOG" id="KOG0731">
    <property type="taxonomic scope" value="Eukaryota"/>
</dbReference>
<dbReference type="HOGENOM" id="CLU_000688_16_2_1"/>
<dbReference type="InParanoid" id="Q9HGM3"/>
<dbReference type="OMA" id="YDKQGGG"/>
<dbReference type="PhylomeDB" id="Q9HGM3"/>
<dbReference type="Reactome" id="R-SPO-9837999">
    <property type="pathway name" value="Mitochondrial protein degradation"/>
</dbReference>
<dbReference type="PRO" id="PR:Q9HGM3"/>
<dbReference type="Proteomes" id="UP000002485">
    <property type="component" value="Chromosome II"/>
</dbReference>
<dbReference type="GO" id="GO:0005745">
    <property type="term" value="C:m-AAA complex"/>
    <property type="evidence" value="ECO:0000318"/>
    <property type="project" value="GO_Central"/>
</dbReference>
<dbReference type="GO" id="GO:0005739">
    <property type="term" value="C:mitochondrion"/>
    <property type="evidence" value="ECO:0007005"/>
    <property type="project" value="PomBase"/>
</dbReference>
<dbReference type="GO" id="GO:0005524">
    <property type="term" value="F:ATP binding"/>
    <property type="evidence" value="ECO:0000250"/>
    <property type="project" value="PomBase"/>
</dbReference>
<dbReference type="GO" id="GO:0016887">
    <property type="term" value="F:ATP hydrolysis activity"/>
    <property type="evidence" value="ECO:0000266"/>
    <property type="project" value="PomBase"/>
</dbReference>
<dbReference type="GO" id="GO:0004176">
    <property type="term" value="F:ATP-dependent peptidase activity"/>
    <property type="evidence" value="ECO:0007669"/>
    <property type="project" value="InterPro"/>
</dbReference>
<dbReference type="GO" id="GO:0004222">
    <property type="term" value="F:metalloendopeptidase activity"/>
    <property type="evidence" value="ECO:0000318"/>
    <property type="project" value="GO_Central"/>
</dbReference>
<dbReference type="GO" id="GO:0008270">
    <property type="term" value="F:zinc ion binding"/>
    <property type="evidence" value="ECO:0007669"/>
    <property type="project" value="InterPro"/>
</dbReference>
<dbReference type="GO" id="GO:0034982">
    <property type="term" value="P:mitochondrial protein processing"/>
    <property type="evidence" value="ECO:0000318"/>
    <property type="project" value="GO_Central"/>
</dbReference>
<dbReference type="GO" id="GO:0141164">
    <property type="term" value="P:mitochondrial protein quality control"/>
    <property type="evidence" value="ECO:0000304"/>
    <property type="project" value="PomBase"/>
</dbReference>
<dbReference type="CDD" id="cd19501">
    <property type="entry name" value="RecA-like_FtsH"/>
    <property type="match status" value="1"/>
</dbReference>
<dbReference type="FunFam" id="1.10.8.60:FF:000019">
    <property type="entry name" value="AFG3-like AAA ATPase 2"/>
    <property type="match status" value="1"/>
</dbReference>
<dbReference type="FunFam" id="1.20.58.760:FF:000003">
    <property type="entry name" value="AFG3-like AAA ATPase 2"/>
    <property type="match status" value="1"/>
</dbReference>
<dbReference type="FunFam" id="3.40.50.300:FF:000001">
    <property type="entry name" value="ATP-dependent zinc metalloprotease FtsH"/>
    <property type="match status" value="1"/>
</dbReference>
<dbReference type="Gene3D" id="1.10.8.60">
    <property type="match status" value="1"/>
</dbReference>
<dbReference type="Gene3D" id="3.40.1690.20">
    <property type="match status" value="1"/>
</dbReference>
<dbReference type="Gene3D" id="3.40.50.300">
    <property type="entry name" value="P-loop containing nucleotide triphosphate hydrolases"/>
    <property type="match status" value="1"/>
</dbReference>
<dbReference type="Gene3D" id="1.20.58.760">
    <property type="entry name" value="Peptidase M41"/>
    <property type="match status" value="1"/>
</dbReference>
<dbReference type="HAMAP" id="MF_01458">
    <property type="entry name" value="FtsH"/>
    <property type="match status" value="1"/>
</dbReference>
<dbReference type="InterPro" id="IPR003593">
    <property type="entry name" value="AAA+_ATPase"/>
</dbReference>
<dbReference type="InterPro" id="IPR041569">
    <property type="entry name" value="AAA_lid_3"/>
</dbReference>
<dbReference type="InterPro" id="IPR050928">
    <property type="entry name" value="ATP-dep_Zn_Metalloprotease"/>
</dbReference>
<dbReference type="InterPro" id="IPR003959">
    <property type="entry name" value="ATPase_AAA_core"/>
</dbReference>
<dbReference type="InterPro" id="IPR003960">
    <property type="entry name" value="ATPase_AAA_CS"/>
</dbReference>
<dbReference type="InterPro" id="IPR005936">
    <property type="entry name" value="FtsH"/>
</dbReference>
<dbReference type="InterPro" id="IPR027417">
    <property type="entry name" value="P-loop_NTPase"/>
</dbReference>
<dbReference type="InterPro" id="IPR011546">
    <property type="entry name" value="Pept_M41_FtsH_extracell"/>
</dbReference>
<dbReference type="InterPro" id="IPR000642">
    <property type="entry name" value="Peptidase_M41"/>
</dbReference>
<dbReference type="InterPro" id="IPR037219">
    <property type="entry name" value="Peptidase_M41-like"/>
</dbReference>
<dbReference type="NCBIfam" id="TIGR01241">
    <property type="entry name" value="FtsH_fam"/>
    <property type="match status" value="1"/>
</dbReference>
<dbReference type="PANTHER" id="PTHR43655:SF2">
    <property type="entry name" value="AFG3 LIKE MATRIX AAA PEPTIDASE SUBUNIT 2, ISOFORM A"/>
    <property type="match status" value="1"/>
</dbReference>
<dbReference type="PANTHER" id="PTHR43655">
    <property type="entry name" value="ATP-DEPENDENT PROTEASE"/>
    <property type="match status" value="1"/>
</dbReference>
<dbReference type="Pfam" id="PF00004">
    <property type="entry name" value="AAA"/>
    <property type="match status" value="1"/>
</dbReference>
<dbReference type="Pfam" id="PF17862">
    <property type="entry name" value="AAA_lid_3"/>
    <property type="match status" value="1"/>
</dbReference>
<dbReference type="Pfam" id="PF06480">
    <property type="entry name" value="FtsH_ext"/>
    <property type="match status" value="1"/>
</dbReference>
<dbReference type="Pfam" id="PF01434">
    <property type="entry name" value="Peptidase_M41"/>
    <property type="match status" value="1"/>
</dbReference>
<dbReference type="SMART" id="SM00382">
    <property type="entry name" value="AAA"/>
    <property type="match status" value="1"/>
</dbReference>
<dbReference type="SUPFAM" id="SSF140990">
    <property type="entry name" value="FtsH protease domain-like"/>
    <property type="match status" value="1"/>
</dbReference>
<dbReference type="SUPFAM" id="SSF52540">
    <property type="entry name" value="P-loop containing nucleoside triphosphate hydrolases"/>
    <property type="match status" value="1"/>
</dbReference>
<dbReference type="PROSITE" id="PS00674">
    <property type="entry name" value="AAA"/>
    <property type="match status" value="1"/>
</dbReference>